<proteinExistence type="inferred from homology"/>
<feature type="chain" id="PRO_0000119431" description="GTP cyclohydrolase 1 2">
    <location>
        <begin position="1"/>
        <end position="186"/>
    </location>
</feature>
<accession>Q88JY1</accession>
<sequence length="186" mass="20886">MSHSLAEHYHEILVGIGENPQREGLLDTPRRAAKAMQYLCNGYAQDLHEVVNGALFESENDEMIVVRDIELYSLCEHHMLPFIGKAHVAYLPTGRVLGLSKVARVVDMFARRLQIQENLTRQIAYAVQEVTDAAGVGVVIEAKHMCMMMRGVEKQNSVMISSVMLGAFRDAPSTRHEFLNLIGRHN</sequence>
<name>GCH12_PSEPK</name>
<organism>
    <name type="scientific">Pseudomonas putida (strain ATCC 47054 / DSM 6125 / CFBP 8728 / NCIMB 11950 / KT2440)</name>
    <dbReference type="NCBI Taxonomy" id="160488"/>
    <lineage>
        <taxon>Bacteria</taxon>
        <taxon>Pseudomonadati</taxon>
        <taxon>Pseudomonadota</taxon>
        <taxon>Gammaproteobacteria</taxon>
        <taxon>Pseudomonadales</taxon>
        <taxon>Pseudomonadaceae</taxon>
        <taxon>Pseudomonas</taxon>
    </lineage>
</organism>
<reference key="1">
    <citation type="journal article" date="2002" name="Environ. Microbiol.">
        <title>Complete genome sequence and comparative analysis of the metabolically versatile Pseudomonas putida KT2440.</title>
        <authorList>
            <person name="Nelson K.E."/>
            <person name="Weinel C."/>
            <person name="Paulsen I.T."/>
            <person name="Dodson R.J."/>
            <person name="Hilbert H."/>
            <person name="Martins dos Santos V.A.P."/>
            <person name="Fouts D.E."/>
            <person name="Gill S.R."/>
            <person name="Pop M."/>
            <person name="Holmes M."/>
            <person name="Brinkac L.M."/>
            <person name="Beanan M.J."/>
            <person name="DeBoy R.T."/>
            <person name="Daugherty S.C."/>
            <person name="Kolonay J.F."/>
            <person name="Madupu R."/>
            <person name="Nelson W.C."/>
            <person name="White O."/>
            <person name="Peterson J.D."/>
            <person name="Khouri H.M."/>
            <person name="Hance I."/>
            <person name="Chris Lee P."/>
            <person name="Holtzapple E.K."/>
            <person name="Scanlan D."/>
            <person name="Tran K."/>
            <person name="Moazzez A."/>
            <person name="Utterback T.R."/>
            <person name="Rizzo M."/>
            <person name="Lee K."/>
            <person name="Kosack D."/>
            <person name="Moestl D."/>
            <person name="Wedler H."/>
            <person name="Lauber J."/>
            <person name="Stjepandic D."/>
            <person name="Hoheisel J."/>
            <person name="Straetz M."/>
            <person name="Heim S."/>
            <person name="Kiewitz C."/>
            <person name="Eisen J.A."/>
            <person name="Timmis K.N."/>
            <person name="Duesterhoeft A."/>
            <person name="Tuemmler B."/>
            <person name="Fraser C.M."/>
        </authorList>
    </citation>
    <scope>NUCLEOTIDE SEQUENCE [LARGE SCALE GENOMIC DNA]</scope>
    <source>
        <strain>ATCC 47054 / DSM 6125 / CFBP 8728 / NCIMB 11950 / KT2440</strain>
    </source>
</reference>
<comment type="catalytic activity">
    <reaction evidence="1">
        <text>GTP + H2O = 7,8-dihydroneopterin 3'-triphosphate + formate + H(+)</text>
        <dbReference type="Rhea" id="RHEA:17473"/>
        <dbReference type="ChEBI" id="CHEBI:15377"/>
        <dbReference type="ChEBI" id="CHEBI:15378"/>
        <dbReference type="ChEBI" id="CHEBI:15740"/>
        <dbReference type="ChEBI" id="CHEBI:37565"/>
        <dbReference type="ChEBI" id="CHEBI:58462"/>
        <dbReference type="EC" id="3.5.4.16"/>
    </reaction>
</comment>
<comment type="pathway">
    <text evidence="1">Cofactor biosynthesis; 7,8-dihydroneopterin triphosphate biosynthesis; 7,8-dihydroneopterin triphosphate from GTP: step 1/1.</text>
</comment>
<comment type="subunit">
    <text evidence="1">Homomer.</text>
</comment>
<comment type="similarity">
    <text evidence="1">Belongs to the GTP cyclohydrolase I family.</text>
</comment>
<evidence type="ECO:0000255" key="1">
    <source>
        <dbReference type="HAMAP-Rule" id="MF_00223"/>
    </source>
</evidence>
<dbReference type="EC" id="3.5.4.16" evidence="1"/>
<dbReference type="EMBL" id="AE015451">
    <property type="protein sequence ID" value="AAN68124.1"/>
    <property type="molecule type" value="Genomic_DNA"/>
</dbReference>
<dbReference type="RefSeq" id="NP_744660.1">
    <property type="nucleotide sequence ID" value="NC_002947.4"/>
</dbReference>
<dbReference type="SMR" id="Q88JY1"/>
<dbReference type="STRING" id="160488.PP_2512"/>
<dbReference type="PaxDb" id="160488-PP_2512"/>
<dbReference type="KEGG" id="ppu:PP_2512"/>
<dbReference type="PATRIC" id="fig|160488.4.peg.2667"/>
<dbReference type="eggNOG" id="COG0302">
    <property type="taxonomic scope" value="Bacteria"/>
</dbReference>
<dbReference type="HOGENOM" id="CLU_049768_3_1_6"/>
<dbReference type="OrthoDB" id="9801207at2"/>
<dbReference type="PhylomeDB" id="Q88JY1"/>
<dbReference type="BioCyc" id="PPUT160488:G1G01-2695-MONOMER"/>
<dbReference type="UniPathway" id="UPA00848">
    <property type="reaction ID" value="UER00151"/>
</dbReference>
<dbReference type="Proteomes" id="UP000000556">
    <property type="component" value="Chromosome"/>
</dbReference>
<dbReference type="GO" id="GO:0005737">
    <property type="term" value="C:cytoplasm"/>
    <property type="evidence" value="ECO:0007669"/>
    <property type="project" value="TreeGrafter"/>
</dbReference>
<dbReference type="GO" id="GO:0005525">
    <property type="term" value="F:GTP binding"/>
    <property type="evidence" value="ECO:0007669"/>
    <property type="project" value="UniProtKB-KW"/>
</dbReference>
<dbReference type="GO" id="GO:0003934">
    <property type="term" value="F:GTP cyclohydrolase I activity"/>
    <property type="evidence" value="ECO:0007669"/>
    <property type="project" value="UniProtKB-UniRule"/>
</dbReference>
<dbReference type="GO" id="GO:0008270">
    <property type="term" value="F:zinc ion binding"/>
    <property type="evidence" value="ECO:0007669"/>
    <property type="project" value="UniProtKB-UniRule"/>
</dbReference>
<dbReference type="GO" id="GO:0006730">
    <property type="term" value="P:one-carbon metabolic process"/>
    <property type="evidence" value="ECO:0007669"/>
    <property type="project" value="UniProtKB-UniRule"/>
</dbReference>
<dbReference type="GO" id="GO:0006729">
    <property type="term" value="P:tetrahydrobiopterin biosynthetic process"/>
    <property type="evidence" value="ECO:0007669"/>
    <property type="project" value="TreeGrafter"/>
</dbReference>
<dbReference type="GO" id="GO:0046654">
    <property type="term" value="P:tetrahydrofolate biosynthetic process"/>
    <property type="evidence" value="ECO:0007669"/>
    <property type="project" value="UniProtKB-UniRule"/>
</dbReference>
<dbReference type="FunFam" id="3.30.1130.10:FF:000001">
    <property type="entry name" value="GTP cyclohydrolase 1"/>
    <property type="match status" value="1"/>
</dbReference>
<dbReference type="Gene3D" id="1.10.286.10">
    <property type="match status" value="1"/>
</dbReference>
<dbReference type="Gene3D" id="3.30.1130.10">
    <property type="match status" value="1"/>
</dbReference>
<dbReference type="HAMAP" id="MF_00223">
    <property type="entry name" value="FolE"/>
    <property type="match status" value="1"/>
</dbReference>
<dbReference type="InterPro" id="IPR043133">
    <property type="entry name" value="GTP-CH-I_C/QueF"/>
</dbReference>
<dbReference type="InterPro" id="IPR043134">
    <property type="entry name" value="GTP-CH-I_N"/>
</dbReference>
<dbReference type="InterPro" id="IPR001474">
    <property type="entry name" value="GTP_CycHdrlase_I"/>
</dbReference>
<dbReference type="InterPro" id="IPR018234">
    <property type="entry name" value="GTP_CycHdrlase_I_CS"/>
</dbReference>
<dbReference type="InterPro" id="IPR020602">
    <property type="entry name" value="GTP_CycHdrlase_I_dom"/>
</dbReference>
<dbReference type="NCBIfam" id="TIGR00063">
    <property type="entry name" value="folE"/>
    <property type="match status" value="1"/>
</dbReference>
<dbReference type="NCBIfam" id="NF006825">
    <property type="entry name" value="PRK09347.1-2"/>
    <property type="match status" value="1"/>
</dbReference>
<dbReference type="NCBIfam" id="NF006826">
    <property type="entry name" value="PRK09347.1-3"/>
    <property type="match status" value="1"/>
</dbReference>
<dbReference type="PANTHER" id="PTHR11109:SF7">
    <property type="entry name" value="GTP CYCLOHYDROLASE 1"/>
    <property type="match status" value="1"/>
</dbReference>
<dbReference type="PANTHER" id="PTHR11109">
    <property type="entry name" value="GTP CYCLOHYDROLASE I"/>
    <property type="match status" value="1"/>
</dbReference>
<dbReference type="Pfam" id="PF01227">
    <property type="entry name" value="GTP_cyclohydroI"/>
    <property type="match status" value="1"/>
</dbReference>
<dbReference type="SUPFAM" id="SSF55620">
    <property type="entry name" value="Tetrahydrobiopterin biosynthesis enzymes-like"/>
    <property type="match status" value="1"/>
</dbReference>
<dbReference type="PROSITE" id="PS00859">
    <property type="entry name" value="GTP_CYCLOHYDROL_1_1"/>
    <property type="match status" value="1"/>
</dbReference>
<dbReference type="PROSITE" id="PS00860">
    <property type="entry name" value="GTP_CYCLOHYDROL_1_2"/>
    <property type="match status" value="1"/>
</dbReference>
<keyword id="KW-0342">GTP-binding</keyword>
<keyword id="KW-0378">Hydrolase</keyword>
<keyword id="KW-0547">Nucleotide-binding</keyword>
<keyword id="KW-0554">One-carbon metabolism</keyword>
<keyword id="KW-1185">Reference proteome</keyword>
<gene>
    <name evidence="1" type="primary">folE2</name>
    <name type="ordered locus">PP_2512</name>
</gene>
<protein>
    <recommendedName>
        <fullName evidence="1">GTP cyclohydrolase 1 2</fullName>
        <ecNumber evidence="1">3.5.4.16</ecNumber>
    </recommendedName>
    <alternativeName>
        <fullName evidence="1">GTP cyclohydrolase I 2</fullName>
        <shortName evidence="1">GTP-CH-I 2</shortName>
    </alternativeName>
</protein>